<name>QR1_TRIVS</name>
<sequence length="329" mass="34872">MAGKLMRAVQYDGYGGGAAGLKHVEVPIPSPGKGEVLIKLEAISLNQLDWKLQNGMVRPFLPRKFPFIPATDVAGEVVRIGQDVKNFKPGDKVVAMLGSFGGGGLAEYGVASEKLTVHRPPEVSAAESSGLPIAGLTAHMALTQHIGLNLDKSGPHKNILITAASGGVGQYAVQLAKLGNTHVTATCGSRNFDLVKSLGADEVIDYKTPEGAALKSPSGKKYDAVIHCASPLPWSVFKPNLSKHGKVIDITPGPRVMLTSAMTKLTCSKKRLVTLLVVIKGEHLSYLVELMREGKLKTVIDSKFSLSKAEEAWAKSIDGHATGKIVVEP</sequence>
<evidence type="ECO:0000269" key="1">
    <source>
    </source>
</evidence>
<evidence type="ECO:0000269" key="2">
    <source>
    </source>
</evidence>
<evidence type="ECO:0000303" key="3">
    <source>
    </source>
</evidence>
<evidence type="ECO:0000305" key="4"/>
<evidence type="ECO:0000312" key="5">
    <source>
        <dbReference type="EMBL" id="AAG53944.1"/>
    </source>
</evidence>
<accession>Q9AYU1</accession>
<keyword id="KW-0150">Chloroplast</keyword>
<keyword id="KW-0472">Membrane</keyword>
<keyword id="KW-0521">NADP</keyword>
<keyword id="KW-0560">Oxidoreductase</keyword>
<keyword id="KW-0934">Plastid</keyword>
<keyword id="KW-1002">Plastid outer membrane</keyword>
<feature type="chain" id="PRO_0000439502" description="Quinone-oxidoreductase QR1, chloroplastic">
    <location>
        <begin position="1"/>
        <end position="329"/>
    </location>
</feature>
<dbReference type="EC" id="1.6.5.5" evidence="2"/>
<dbReference type="EMBL" id="AF304461">
    <property type="protein sequence ID" value="AAG53944.1"/>
    <property type="molecule type" value="mRNA"/>
</dbReference>
<dbReference type="SMR" id="Q9AYU1"/>
<dbReference type="GO" id="GO:0009707">
    <property type="term" value="C:chloroplast outer membrane"/>
    <property type="evidence" value="ECO:0007669"/>
    <property type="project" value="UniProtKB-SubCell"/>
</dbReference>
<dbReference type="GO" id="GO:0003960">
    <property type="term" value="F:NADPH:quinone reductase activity"/>
    <property type="evidence" value="ECO:0007669"/>
    <property type="project" value="UniProtKB-EC"/>
</dbReference>
<dbReference type="GO" id="GO:0009820">
    <property type="term" value="P:alkaloid metabolic process"/>
    <property type="evidence" value="ECO:0007669"/>
    <property type="project" value="UniProtKB-ARBA"/>
</dbReference>
<dbReference type="CDD" id="cd08267">
    <property type="entry name" value="MDR1"/>
    <property type="match status" value="1"/>
</dbReference>
<dbReference type="Gene3D" id="3.90.180.10">
    <property type="entry name" value="Medium-chain alcohol dehydrogenases, catalytic domain"/>
    <property type="match status" value="1"/>
</dbReference>
<dbReference type="Gene3D" id="3.40.50.720">
    <property type="entry name" value="NAD(P)-binding Rossmann-like Domain"/>
    <property type="match status" value="1"/>
</dbReference>
<dbReference type="InterPro" id="IPR013154">
    <property type="entry name" value="ADH-like_N"/>
</dbReference>
<dbReference type="InterPro" id="IPR052733">
    <property type="entry name" value="Chloroplast_QOR"/>
</dbReference>
<dbReference type="InterPro" id="IPR011032">
    <property type="entry name" value="GroES-like_sf"/>
</dbReference>
<dbReference type="InterPro" id="IPR036291">
    <property type="entry name" value="NAD(P)-bd_dom_sf"/>
</dbReference>
<dbReference type="InterPro" id="IPR020843">
    <property type="entry name" value="PKS_ER"/>
</dbReference>
<dbReference type="PANTHER" id="PTHR44013">
    <property type="entry name" value="ZINC-TYPE ALCOHOL DEHYDROGENASE-LIKE PROTEIN C16A3.02C"/>
    <property type="match status" value="1"/>
</dbReference>
<dbReference type="PANTHER" id="PTHR44013:SF1">
    <property type="entry name" value="ZINC-TYPE ALCOHOL DEHYDROGENASE-LIKE PROTEIN C16A3.02C"/>
    <property type="match status" value="1"/>
</dbReference>
<dbReference type="Pfam" id="PF08240">
    <property type="entry name" value="ADH_N"/>
    <property type="match status" value="1"/>
</dbReference>
<dbReference type="Pfam" id="PF13602">
    <property type="entry name" value="ADH_zinc_N_2"/>
    <property type="match status" value="1"/>
</dbReference>
<dbReference type="SMART" id="SM00829">
    <property type="entry name" value="PKS_ER"/>
    <property type="match status" value="1"/>
</dbReference>
<dbReference type="SUPFAM" id="SSF50129">
    <property type="entry name" value="GroES-like"/>
    <property type="match status" value="1"/>
</dbReference>
<dbReference type="SUPFAM" id="SSF51735">
    <property type="entry name" value="NAD(P)-binding Rossmann-fold domains"/>
    <property type="match status" value="1"/>
</dbReference>
<proteinExistence type="evidence at protein level"/>
<protein>
    <recommendedName>
        <fullName evidence="3">Quinone-oxidoreductase QR1, chloroplastic</fullName>
        <shortName evidence="3">TvQR1</shortName>
        <ecNumber evidence="2">1.6.5.5</ecNumber>
    </recommendedName>
</protein>
<comment type="function">
    <text evidence="2">NADPH-dependent single-electron reducing quinone reductase (PubMed:20424175). Involved in haustorium initiation in parasitic plants through redox cycling of exogenous haustorium-inducing factors (PubMed:20424175). Can use 9,10-phenanthrenequinone (PAQ), 1,2-naphthoquinone, 5-hydroxy-1,4-naphthoquinone (juglone) and 2,6-dimethoxy-p-benzoquinone (DMBQ) as substrates, but has no activity with menadione, diamide, 2,3-dimethoxy-5-methyl-1,4-benzoquinone or 1,4-naphthoquinone (PubMed:20424175).</text>
</comment>
<comment type="catalytic activity">
    <reaction evidence="2">
        <text>2 a quinone + NADPH + H(+) = 2 a 1,4-benzosemiquinone + NADP(+)</text>
        <dbReference type="Rhea" id="RHEA:14269"/>
        <dbReference type="ChEBI" id="CHEBI:15378"/>
        <dbReference type="ChEBI" id="CHEBI:57783"/>
        <dbReference type="ChEBI" id="CHEBI:58349"/>
        <dbReference type="ChEBI" id="CHEBI:132124"/>
        <dbReference type="ChEBI" id="CHEBI:134225"/>
        <dbReference type="EC" id="1.6.5.5"/>
    </reaction>
</comment>
<comment type="activity regulation">
    <text evidence="2">Inhibited by dicumarol.</text>
</comment>
<comment type="biophysicochemical properties">
    <kinetics>
        <text evidence="2">kcat is 23.3 sec(-1) with 9,10-phenanthrenequinone as substrate. kcat is 2.44 sec(-1) with 1,2-naphthoquinone as substrate. kcat is 0.31 sec(-1) with 5-hydroxy-1,4-naphthoquinone as substrate. kcat is 0.09 sec(-1) with 2,6-dimethoxy-p-benzoquinone.</text>
    </kinetics>
</comment>
<comment type="subcellular location">
    <subcellularLocation>
        <location evidence="2">Plastid</location>
        <location evidence="2">Chloroplast outer membrane</location>
    </subcellularLocation>
</comment>
<comment type="induction">
    <text evidence="1 2">Up-regulated by 2,6-dimethoxy-p-benzoquinone (DMBQ), 5-hydroxy-1,4-naphthoquinone (juglone), 2,6-dimethylbenzoquinone and menadione (PubMed:11260494, PubMed:20424175). Up-regulated by host root contact (PubMed:20424175).</text>
</comment>
<comment type="similarity">
    <text evidence="4">Belongs to the zinc-containing alcohol dehydrogenase family. Quinone oxidoreductase subfamily.</text>
</comment>
<reference key="1">
    <citation type="journal article" date="2001" name="Plant J.">
        <title>Quinone oxidoreductase message levels are differentially regulated in parasitic and non-parasitic plants exposed to allelopathic quinones.</title>
        <authorList>
            <person name="Matvienko M."/>
            <person name="Wojtowicz A."/>
            <person name="Wrobel R."/>
            <person name="Jamison D."/>
            <person name="Goldwasser Y."/>
            <person name="Yoder J.I."/>
        </authorList>
    </citation>
    <scope>NUCLEOTIDE SEQUENCE [MRNA]</scope>
    <scope>INDUCTION BY QUINONES</scope>
    <source>
        <tissue>Root</tissue>
    </source>
</reference>
<reference key="2">
    <citation type="journal article" date="2010" name="Plant Cell">
        <title>A single-electron reducing quinone oxidoreductase is necessary to induce haustorium development in the root parasitic plant Triphysaria.</title>
        <authorList>
            <person name="Bandaranayake P.C."/>
            <person name="Filappova T."/>
            <person name="Tomilov A."/>
            <person name="Tomilova N.B."/>
            <person name="Jamison-McClung D."/>
            <person name="Ngo Q."/>
            <person name="Inoue K."/>
            <person name="Yoder J.I."/>
        </authorList>
    </citation>
    <scope>FUNCTION</scope>
    <scope>SUBSTRATE SPECIFICITY</scope>
    <scope>CATALYTIC ACTIVITY</scope>
    <scope>BIOPHYSICOCHEMICAL PROPERTIES</scope>
    <scope>ACTIVITY REGULATION</scope>
    <scope>INDUCTION BY ROOT CONTACT</scope>
    <scope>SUBCELLULAR LOCATION</scope>
</reference>
<organism evidence="5">
    <name type="scientific">Triphysaria versicolor</name>
    <name type="common">Yellow owl's clover</name>
    <dbReference type="NCBI Taxonomy" id="64093"/>
    <lineage>
        <taxon>Eukaryota</taxon>
        <taxon>Viridiplantae</taxon>
        <taxon>Streptophyta</taxon>
        <taxon>Embryophyta</taxon>
        <taxon>Tracheophyta</taxon>
        <taxon>Spermatophyta</taxon>
        <taxon>Magnoliopsida</taxon>
        <taxon>eudicotyledons</taxon>
        <taxon>Gunneridae</taxon>
        <taxon>Pentapetalae</taxon>
        <taxon>asterids</taxon>
        <taxon>lamiids</taxon>
        <taxon>Lamiales</taxon>
        <taxon>Orobanchaceae</taxon>
        <taxon>Pedicularideae</taxon>
        <taxon>Castillejinae</taxon>
        <taxon>Triphysaria</taxon>
    </lineage>
</organism>